<name>TRUA_PHOLL</name>
<proteinExistence type="inferred from homology"/>
<evidence type="ECO:0000255" key="1">
    <source>
        <dbReference type="HAMAP-Rule" id="MF_00171"/>
    </source>
</evidence>
<evidence type="ECO:0000305" key="2"/>
<protein>
    <recommendedName>
        <fullName evidence="1">tRNA pseudouridine synthase A</fullName>
        <ecNumber evidence="1">5.4.99.12</ecNumber>
    </recommendedName>
    <alternativeName>
        <fullName evidence="1">tRNA pseudouridine(38-40) synthase</fullName>
    </alternativeName>
    <alternativeName>
        <fullName evidence="1">tRNA pseudouridylate synthase I</fullName>
    </alternativeName>
    <alternativeName>
        <fullName evidence="1">tRNA-uridine isomerase I</fullName>
    </alternativeName>
</protein>
<comment type="function">
    <text evidence="1">Formation of pseudouridine at positions 38, 39 and 40 in the anticodon stem and loop of transfer RNAs.</text>
</comment>
<comment type="catalytic activity">
    <reaction evidence="1">
        <text>uridine(38/39/40) in tRNA = pseudouridine(38/39/40) in tRNA</text>
        <dbReference type="Rhea" id="RHEA:22376"/>
        <dbReference type="Rhea" id="RHEA-COMP:10085"/>
        <dbReference type="Rhea" id="RHEA-COMP:10087"/>
        <dbReference type="ChEBI" id="CHEBI:65314"/>
        <dbReference type="ChEBI" id="CHEBI:65315"/>
        <dbReference type="EC" id="5.4.99.12"/>
    </reaction>
</comment>
<comment type="subunit">
    <text evidence="1">Homodimer.</text>
</comment>
<comment type="similarity">
    <text evidence="1">Belongs to the tRNA pseudouridine synthase TruA family.</text>
</comment>
<comment type="sequence caution" evidence="2">
    <conflict type="erroneous initiation">
        <sequence resource="EMBL-CDS" id="CAE15547"/>
    </conflict>
</comment>
<sequence>MKIALGIEYDGSRYYGWQRQQEVKSVQGCLEEALSKVADEPISVFCAGRTDAGVHATGQVVHFETSVQRKDAAWTMGVNVHLPPDIAVRWVKTVDEGFHARFSATARRYRYIIFNHRYRPAVLANGVTHFHYPLDEKRMHQAAQCILGENDFTSFRAVQCQSKTPWRNVMHINVNRYGHYVVIDIKANAFVHHMVRNIAGSLMEIGCGNQDINWMAQLLALKDRAKAAATAKAAGLYLVAVDYPVQFDLPCAVMGPLFLADDLI</sequence>
<gene>
    <name evidence="1" type="primary">truA</name>
    <name type="ordered locus">plu3173</name>
</gene>
<feature type="chain" id="PRO_0000057428" description="tRNA pseudouridine synthase A">
    <location>
        <begin position="1"/>
        <end position="264"/>
    </location>
</feature>
<feature type="active site" description="Nucleophile" evidence="1">
    <location>
        <position position="51"/>
    </location>
</feature>
<feature type="binding site" evidence="1">
    <location>
        <position position="109"/>
    </location>
    <ligand>
        <name>substrate</name>
    </ligand>
</feature>
<reference key="1">
    <citation type="journal article" date="2003" name="Nat. Biotechnol.">
        <title>The genome sequence of the entomopathogenic bacterium Photorhabdus luminescens.</title>
        <authorList>
            <person name="Duchaud E."/>
            <person name="Rusniok C."/>
            <person name="Frangeul L."/>
            <person name="Buchrieser C."/>
            <person name="Givaudan A."/>
            <person name="Taourit S."/>
            <person name="Bocs S."/>
            <person name="Boursaux-Eude C."/>
            <person name="Chandler M."/>
            <person name="Charles J.-F."/>
            <person name="Dassa E."/>
            <person name="Derose R."/>
            <person name="Derzelle S."/>
            <person name="Freyssinet G."/>
            <person name="Gaudriault S."/>
            <person name="Medigue C."/>
            <person name="Lanois A."/>
            <person name="Powell K."/>
            <person name="Siguier P."/>
            <person name="Vincent R."/>
            <person name="Wingate V."/>
            <person name="Zouine M."/>
            <person name="Glaser P."/>
            <person name="Boemare N."/>
            <person name="Danchin A."/>
            <person name="Kunst F."/>
        </authorList>
    </citation>
    <scope>NUCLEOTIDE SEQUENCE [LARGE SCALE GENOMIC DNA]</scope>
    <source>
        <strain>DSM 15139 / CIP 105565 / TT01</strain>
    </source>
</reference>
<organism>
    <name type="scientific">Photorhabdus laumondii subsp. laumondii (strain DSM 15139 / CIP 105565 / TT01)</name>
    <name type="common">Photorhabdus luminescens subsp. laumondii</name>
    <dbReference type="NCBI Taxonomy" id="243265"/>
    <lineage>
        <taxon>Bacteria</taxon>
        <taxon>Pseudomonadati</taxon>
        <taxon>Pseudomonadota</taxon>
        <taxon>Gammaproteobacteria</taxon>
        <taxon>Enterobacterales</taxon>
        <taxon>Morganellaceae</taxon>
        <taxon>Photorhabdus</taxon>
    </lineage>
</organism>
<keyword id="KW-0413">Isomerase</keyword>
<keyword id="KW-1185">Reference proteome</keyword>
<keyword id="KW-0819">tRNA processing</keyword>
<accession>Q7MB17</accession>
<dbReference type="EC" id="5.4.99.12" evidence="1"/>
<dbReference type="EMBL" id="BX571869">
    <property type="protein sequence ID" value="CAE15547.1"/>
    <property type="status" value="ALT_INIT"/>
    <property type="molecule type" value="Genomic_DNA"/>
</dbReference>
<dbReference type="RefSeq" id="WP_173362530.1">
    <property type="nucleotide sequence ID" value="NC_005126.1"/>
</dbReference>
<dbReference type="SMR" id="Q7MB17"/>
<dbReference type="STRING" id="243265.plu3173"/>
<dbReference type="GeneID" id="48849431"/>
<dbReference type="KEGG" id="plu:plu3173"/>
<dbReference type="eggNOG" id="COG0101">
    <property type="taxonomic scope" value="Bacteria"/>
</dbReference>
<dbReference type="HOGENOM" id="CLU_014673_0_2_6"/>
<dbReference type="Proteomes" id="UP000002514">
    <property type="component" value="Chromosome"/>
</dbReference>
<dbReference type="GO" id="GO:0003723">
    <property type="term" value="F:RNA binding"/>
    <property type="evidence" value="ECO:0007669"/>
    <property type="project" value="InterPro"/>
</dbReference>
<dbReference type="GO" id="GO:0160147">
    <property type="term" value="F:tRNA pseudouridine(38-40) synthase activity"/>
    <property type="evidence" value="ECO:0007669"/>
    <property type="project" value="UniProtKB-EC"/>
</dbReference>
<dbReference type="GO" id="GO:0031119">
    <property type="term" value="P:tRNA pseudouridine synthesis"/>
    <property type="evidence" value="ECO:0007669"/>
    <property type="project" value="UniProtKB-UniRule"/>
</dbReference>
<dbReference type="CDD" id="cd02570">
    <property type="entry name" value="PseudoU_synth_EcTruA"/>
    <property type="match status" value="1"/>
</dbReference>
<dbReference type="FunFam" id="3.30.70.580:FF:000001">
    <property type="entry name" value="tRNA pseudouridine synthase A"/>
    <property type="match status" value="1"/>
</dbReference>
<dbReference type="FunFam" id="3.30.70.660:FF:000001">
    <property type="entry name" value="tRNA pseudouridine synthase A"/>
    <property type="match status" value="1"/>
</dbReference>
<dbReference type="Gene3D" id="3.30.70.660">
    <property type="entry name" value="Pseudouridine synthase I, catalytic domain, C-terminal subdomain"/>
    <property type="match status" value="1"/>
</dbReference>
<dbReference type="Gene3D" id="3.30.70.580">
    <property type="entry name" value="Pseudouridine synthase I, catalytic domain, N-terminal subdomain"/>
    <property type="match status" value="1"/>
</dbReference>
<dbReference type="HAMAP" id="MF_00171">
    <property type="entry name" value="TruA"/>
    <property type="match status" value="1"/>
</dbReference>
<dbReference type="InterPro" id="IPR020103">
    <property type="entry name" value="PsdUridine_synth_cat_dom_sf"/>
</dbReference>
<dbReference type="InterPro" id="IPR001406">
    <property type="entry name" value="PsdUridine_synth_TruA"/>
</dbReference>
<dbReference type="InterPro" id="IPR020097">
    <property type="entry name" value="PsdUridine_synth_TruA_a/b_dom"/>
</dbReference>
<dbReference type="InterPro" id="IPR020095">
    <property type="entry name" value="PsdUridine_synth_TruA_C"/>
</dbReference>
<dbReference type="InterPro" id="IPR020094">
    <property type="entry name" value="TruA/RsuA/RluB/E/F_N"/>
</dbReference>
<dbReference type="NCBIfam" id="TIGR00071">
    <property type="entry name" value="hisT_truA"/>
    <property type="match status" value="1"/>
</dbReference>
<dbReference type="PANTHER" id="PTHR11142">
    <property type="entry name" value="PSEUDOURIDYLATE SYNTHASE"/>
    <property type="match status" value="1"/>
</dbReference>
<dbReference type="PANTHER" id="PTHR11142:SF0">
    <property type="entry name" value="TRNA PSEUDOURIDINE SYNTHASE-LIKE 1"/>
    <property type="match status" value="1"/>
</dbReference>
<dbReference type="Pfam" id="PF01416">
    <property type="entry name" value="PseudoU_synth_1"/>
    <property type="match status" value="2"/>
</dbReference>
<dbReference type="PIRSF" id="PIRSF001430">
    <property type="entry name" value="tRNA_psdUrid_synth"/>
    <property type="match status" value="1"/>
</dbReference>
<dbReference type="SUPFAM" id="SSF55120">
    <property type="entry name" value="Pseudouridine synthase"/>
    <property type="match status" value="1"/>
</dbReference>